<keyword id="KW-0143">Chaperone</keyword>
<keyword id="KW-0963">Cytoplasm</keyword>
<keyword id="KW-1015">Disulfide bond</keyword>
<keyword id="KW-0676">Redox-active center</keyword>
<keyword id="KW-0862">Zinc</keyword>
<comment type="function">
    <text evidence="1">Redox regulated molecular chaperone. Protects both thermally unfolding and oxidatively damaged proteins from irreversible aggregation. Plays an important role in the bacterial defense system toward oxidative stress.</text>
</comment>
<comment type="subcellular location">
    <subcellularLocation>
        <location evidence="1">Cytoplasm</location>
    </subcellularLocation>
</comment>
<comment type="PTM">
    <text evidence="1">Under oxidizing conditions two disulfide bonds are formed involving the reactive cysteines. Under reducing conditions zinc is bound to the reactive cysteines and the protein is inactive.</text>
</comment>
<comment type="similarity">
    <text evidence="1">Belongs to the HSP33 family.</text>
</comment>
<feature type="chain" id="PRO_1000095013" description="33 kDa chaperonin">
    <location>
        <begin position="1"/>
        <end position="295"/>
    </location>
</feature>
<feature type="disulfide bond" description="Redox-active" evidence="1">
    <location>
        <begin position="238"/>
        <end position="240"/>
    </location>
</feature>
<feature type="disulfide bond" description="Redox-active" evidence="1">
    <location>
        <begin position="271"/>
        <end position="274"/>
    </location>
</feature>
<protein>
    <recommendedName>
        <fullName evidence="1">33 kDa chaperonin</fullName>
    </recommendedName>
    <alternativeName>
        <fullName evidence="1">Heat shock protein 33 homolog</fullName>
        <shortName evidence="1">HSP33</shortName>
    </alternativeName>
</protein>
<reference key="1">
    <citation type="submission" date="2008-04" db="EMBL/GenBank/DDBJ databases">
        <title>Complete sequence of Clostridium botulinum strain Eklund.</title>
        <authorList>
            <person name="Brinkac L.M."/>
            <person name="Brown J.L."/>
            <person name="Bruce D."/>
            <person name="Detter C."/>
            <person name="Munk C."/>
            <person name="Smith L.A."/>
            <person name="Smith T.J."/>
            <person name="Sutton G."/>
            <person name="Brettin T.S."/>
        </authorList>
    </citation>
    <scope>NUCLEOTIDE SEQUENCE [LARGE SCALE GENOMIC DNA]</scope>
    <source>
        <strain>Eklund 17B / Type B</strain>
    </source>
</reference>
<gene>
    <name evidence="1" type="primary">hslO</name>
    <name type="ordered locus">CLL_A2482</name>
</gene>
<evidence type="ECO:0000255" key="1">
    <source>
        <dbReference type="HAMAP-Rule" id="MF_00117"/>
    </source>
</evidence>
<sequence length="295" mass="31982">MKDKIIRATAKNGMVRIIGGITTNLVNEGSKIHQCTPVAAAALGRMLTAGTLMGTTLKGEKEALTLKINGGGEAKGITVTAHNDASVKGFIGNPYVTRELNDKGKLDVGGAIGKDGLLYVIKDLGLKEPYVGQVPIYSGEIAEDFAYYFTVSEQTPSAVSLGVLVDKNLSIKAAGGFIVQMMPDADELLADLVTYRLEEIPPITTLISEGKSIEEILEFIFEGMDLNILDSIEPKYKCDCSREKVEKALASIGKNELQEIYDDGKNEEIVCNFCNTKYTFTTNDIDKLLKNSIKK</sequence>
<accession>B2TS64</accession>
<dbReference type="EMBL" id="CP001056">
    <property type="protein sequence ID" value="ACD23686.1"/>
    <property type="molecule type" value="Genomic_DNA"/>
</dbReference>
<dbReference type="SMR" id="B2TS64"/>
<dbReference type="KEGG" id="cbk:CLL_A2482"/>
<dbReference type="HOGENOM" id="CLU_054493_1_0_9"/>
<dbReference type="Proteomes" id="UP000001195">
    <property type="component" value="Chromosome"/>
</dbReference>
<dbReference type="GO" id="GO:0005737">
    <property type="term" value="C:cytoplasm"/>
    <property type="evidence" value="ECO:0007669"/>
    <property type="project" value="UniProtKB-SubCell"/>
</dbReference>
<dbReference type="GO" id="GO:0044183">
    <property type="term" value="F:protein folding chaperone"/>
    <property type="evidence" value="ECO:0007669"/>
    <property type="project" value="TreeGrafter"/>
</dbReference>
<dbReference type="GO" id="GO:0051082">
    <property type="term" value="F:unfolded protein binding"/>
    <property type="evidence" value="ECO:0007669"/>
    <property type="project" value="UniProtKB-UniRule"/>
</dbReference>
<dbReference type="GO" id="GO:0042026">
    <property type="term" value="P:protein refolding"/>
    <property type="evidence" value="ECO:0007669"/>
    <property type="project" value="TreeGrafter"/>
</dbReference>
<dbReference type="CDD" id="cd00498">
    <property type="entry name" value="Hsp33"/>
    <property type="match status" value="1"/>
</dbReference>
<dbReference type="Gene3D" id="3.55.30.10">
    <property type="entry name" value="Hsp33 domain"/>
    <property type="match status" value="1"/>
</dbReference>
<dbReference type="Gene3D" id="3.90.1280.10">
    <property type="entry name" value="HSP33 redox switch-like"/>
    <property type="match status" value="1"/>
</dbReference>
<dbReference type="HAMAP" id="MF_00117">
    <property type="entry name" value="HslO"/>
    <property type="match status" value="1"/>
</dbReference>
<dbReference type="InterPro" id="IPR000397">
    <property type="entry name" value="Heat_shock_Hsp33"/>
</dbReference>
<dbReference type="InterPro" id="IPR016154">
    <property type="entry name" value="Heat_shock_Hsp33_C"/>
</dbReference>
<dbReference type="InterPro" id="IPR016153">
    <property type="entry name" value="Heat_shock_Hsp33_N"/>
</dbReference>
<dbReference type="NCBIfam" id="NF001033">
    <property type="entry name" value="PRK00114.1"/>
    <property type="match status" value="1"/>
</dbReference>
<dbReference type="PANTHER" id="PTHR30111">
    <property type="entry name" value="33 KDA CHAPERONIN"/>
    <property type="match status" value="1"/>
</dbReference>
<dbReference type="PANTHER" id="PTHR30111:SF1">
    <property type="entry name" value="33 KDA CHAPERONIN"/>
    <property type="match status" value="1"/>
</dbReference>
<dbReference type="Pfam" id="PF01430">
    <property type="entry name" value="HSP33"/>
    <property type="match status" value="1"/>
</dbReference>
<dbReference type="PIRSF" id="PIRSF005261">
    <property type="entry name" value="Heat_shock_Hsp33"/>
    <property type="match status" value="1"/>
</dbReference>
<dbReference type="SUPFAM" id="SSF64397">
    <property type="entry name" value="Hsp33 domain"/>
    <property type="match status" value="1"/>
</dbReference>
<dbReference type="SUPFAM" id="SSF118352">
    <property type="entry name" value="HSP33 redox switch-like"/>
    <property type="match status" value="1"/>
</dbReference>
<name>HSLO_CLOBB</name>
<organism>
    <name type="scientific">Clostridium botulinum (strain Eklund 17B / Type B)</name>
    <dbReference type="NCBI Taxonomy" id="935198"/>
    <lineage>
        <taxon>Bacteria</taxon>
        <taxon>Bacillati</taxon>
        <taxon>Bacillota</taxon>
        <taxon>Clostridia</taxon>
        <taxon>Eubacteriales</taxon>
        <taxon>Clostridiaceae</taxon>
        <taxon>Clostridium</taxon>
    </lineage>
</organism>
<proteinExistence type="inferred from homology"/>